<proteinExistence type="evidence at protein level"/>
<comment type="function">
    <text evidence="3 6 12 19 20 21">Catalyzes the oxidation of cis-isomers of retinol, including 11-cis-, 9-cis-, and 13-cis-retinol in an NAD-dependent manner (PubMed:10588954, PubMed:11675386, PubMed:9115228, PubMed:9931293). Has no activity towards all-trans retinal (By similarity). Plays a significant role in 11-cis retinol oxidation in the retinal pigment epithelium cells (RPE). Also recognizes steroids (androsterone, androstanediol) as its substrates (PubMed:29541409, PubMed:9931293).</text>
</comment>
<comment type="catalytic activity">
    <reaction evidence="6 12 21">
        <text>11-cis-retinol + NAD(+) = 11-cis-retinal + NADH + H(+)</text>
        <dbReference type="Rhea" id="RHEA:42060"/>
        <dbReference type="ChEBI" id="CHEBI:15378"/>
        <dbReference type="ChEBI" id="CHEBI:16066"/>
        <dbReference type="ChEBI" id="CHEBI:16302"/>
        <dbReference type="ChEBI" id="CHEBI:57540"/>
        <dbReference type="ChEBI" id="CHEBI:57945"/>
        <dbReference type="EC" id="1.1.1.315"/>
    </reaction>
</comment>
<comment type="catalytic activity">
    <reaction evidence="20 21">
        <text>9-cis-retinol + NAD(+) = 9-cis-retinal + NADH + H(+)</text>
        <dbReference type="Rhea" id="RHEA:42052"/>
        <dbReference type="ChEBI" id="CHEBI:15378"/>
        <dbReference type="ChEBI" id="CHEBI:57540"/>
        <dbReference type="ChEBI" id="CHEBI:57945"/>
        <dbReference type="ChEBI" id="CHEBI:78272"/>
        <dbReference type="ChEBI" id="CHEBI:78273"/>
    </reaction>
</comment>
<comment type="catalytic activity">
    <reaction evidence="21">
        <text>13-cis-retinol + NAD(+) = 13-cis-retinal + NADH + H(+)</text>
        <dbReference type="Rhea" id="RHEA:42056"/>
        <dbReference type="ChEBI" id="CHEBI:15378"/>
        <dbReference type="ChEBI" id="CHEBI:45479"/>
        <dbReference type="ChEBI" id="CHEBI:45487"/>
        <dbReference type="ChEBI" id="CHEBI:57540"/>
        <dbReference type="ChEBI" id="CHEBI:57945"/>
    </reaction>
</comment>
<comment type="catalytic activity">
    <reaction evidence="19 21">
        <text>androsterone + NAD(+) = 5alpha-androstan-3,17-dione + NADH + H(+)</text>
        <dbReference type="Rhea" id="RHEA:20381"/>
        <dbReference type="ChEBI" id="CHEBI:15378"/>
        <dbReference type="ChEBI" id="CHEBI:15994"/>
        <dbReference type="ChEBI" id="CHEBI:16032"/>
        <dbReference type="ChEBI" id="CHEBI:57540"/>
        <dbReference type="ChEBI" id="CHEBI:57945"/>
        <dbReference type="EC" id="1.1.1.209"/>
    </reaction>
</comment>
<comment type="catalytic activity">
    <reaction evidence="21">
        <text>5alpha-androstane-3alpha,17beta-diol + NAD(+) = 17beta-hydroxy-5alpha-androstan-3-one + NADH + H(+)</text>
        <dbReference type="Rhea" id="RHEA:42004"/>
        <dbReference type="ChEBI" id="CHEBI:15378"/>
        <dbReference type="ChEBI" id="CHEBI:16330"/>
        <dbReference type="ChEBI" id="CHEBI:36713"/>
        <dbReference type="ChEBI" id="CHEBI:57540"/>
        <dbReference type="ChEBI" id="CHEBI:57945"/>
        <dbReference type="EC" id="1.1.1.53"/>
    </reaction>
</comment>
<comment type="activity regulation">
    <text evidence="6">Inhibited by 9-cis-, 13-cis- and all-trans-retinoic acids, with the most potent inhibitor being 13-cis-retinoic acid. Weakly inhibited by oleic acid.</text>
</comment>
<comment type="biophysicochemical properties">
    <phDependence>
        <text evidence="20">Optimum pH is 7.5-8.0 for 9-cis retinol dehydrogenase activity.</text>
    </phDependence>
</comment>
<comment type="pathway">
    <text evidence="20">Cofactor metabolism; retinol metabolism.</text>
</comment>
<comment type="subunit">
    <text evidence="12">Homodimer.</text>
</comment>
<comment type="subcellular location">
    <subcellularLocation>
        <location evidence="12">Endoplasmic reticulum membrane</location>
        <topology evidence="4">Multi-pass membrane protein</topology>
        <orientation evidence="12">Lumenal side</orientation>
    </subcellularLocation>
</comment>
<comment type="tissue specificity">
    <text evidence="20 21">Widely expressed. In the eye, abundant in the retinal pigment epithelium.</text>
</comment>
<comment type="domain">
    <text evidence="2">The last 8 amino acids of the C-terminal tail are important for a proper localization as well as for the in vivo enzymatic activity.</text>
</comment>
<comment type="disease" evidence="5 7 8 9 10 11 12 13 14 15 16 17 18">
    <disease id="DI-04584">
        <name>Fundus albipunctatus</name>
        <acronym>FALBI</acronym>
        <description>A form of fleck retina disease characterized by discrete uniform white dots over the entire fundus with greatest density in the mid-periphery and no macular involvement. Night blindness occurs. Inheritance can be autosomal dominant or autosomal recessive.</description>
        <dbReference type="MIM" id="136880"/>
    </disease>
    <text>The disease is caused by variants affecting the gene represented in this entry.</text>
</comment>
<comment type="similarity">
    <text evidence="24">Belongs to the short-chain dehydrogenases/reductases (SDR) family.</text>
</comment>
<gene>
    <name evidence="26" type="primary">RDH5</name>
    <name type="synonym">HSD17B9</name>
    <name evidence="26" type="synonym">RDH1</name>
    <name evidence="22" type="synonym">SDR9C5</name>
</gene>
<sequence>MWLPLLLGALLWAVLWLLRDRQSLPASNAFVFITGCDSGFGRLLALQLDQRGFRVLASCLTPSGAEDLQRVASSRLHTTLLDITDPQSVQQAAKWVEMHVKEAGLFGLVNNAGVAGIIGPTPWLTRDDFQRVLNVNTMGPIGVTLALLPLLQQARGRVINITSVLGRLAANGGGYCVSKFGLEAFSDSLRRDVAHFGIRVSIVEPGFFRTPVTNLESLEKTLQACWARLPPATQAHYGGAFLTKYLKMQQRIMNLICDPDLTKVSRCLEHALTARHPRTRYSPGWDAKLLWLPASYLPASLVDAVLTWVLPKPAQAVY</sequence>
<dbReference type="EC" id="1.1.1.209" evidence="19 21"/>
<dbReference type="EC" id="1.1.1.315" evidence="6 12 21"/>
<dbReference type="EC" id="1.1.1.53" evidence="21"/>
<dbReference type="EMBL" id="U43559">
    <property type="protein sequence ID" value="AAC50725.1"/>
    <property type="molecule type" value="mRNA"/>
</dbReference>
<dbReference type="EMBL" id="U89717">
    <property type="protein sequence ID" value="AAB93668.1"/>
    <property type="molecule type" value="mRNA"/>
</dbReference>
<dbReference type="EMBL" id="AF037062">
    <property type="protein sequence ID" value="AAC09250.1"/>
    <property type="molecule type" value="Genomic_DNA"/>
</dbReference>
<dbReference type="EMBL" id="BC028298">
    <property type="protein sequence ID" value="AAH28298.1"/>
    <property type="molecule type" value="mRNA"/>
</dbReference>
<dbReference type="CCDS" id="CCDS31829.1"/>
<dbReference type="RefSeq" id="NP_001186700.1">
    <property type="nucleotide sequence ID" value="NM_001199771.3"/>
</dbReference>
<dbReference type="RefSeq" id="NP_002896.2">
    <property type="nucleotide sequence ID" value="NM_002905.5"/>
</dbReference>
<dbReference type="SMR" id="Q92781"/>
<dbReference type="BioGRID" id="111892">
    <property type="interactions" value="16"/>
</dbReference>
<dbReference type="FunCoup" id="Q92781">
    <property type="interactions" value="428"/>
</dbReference>
<dbReference type="IntAct" id="Q92781">
    <property type="interactions" value="4"/>
</dbReference>
<dbReference type="STRING" id="9606.ENSP00000257895"/>
<dbReference type="DrugBank" id="DB00157">
    <property type="generic name" value="NADH"/>
</dbReference>
<dbReference type="DrugBank" id="DB00162">
    <property type="generic name" value="Vitamin A"/>
</dbReference>
<dbReference type="DrugCentral" id="Q92781"/>
<dbReference type="SwissLipids" id="SLP:000000797"/>
<dbReference type="GlyCosmos" id="Q92781">
    <property type="glycosylation" value="1 site, No reported glycans"/>
</dbReference>
<dbReference type="GlyGen" id="Q92781">
    <property type="glycosylation" value="2 sites"/>
</dbReference>
<dbReference type="iPTMnet" id="Q92781"/>
<dbReference type="PhosphoSitePlus" id="Q92781"/>
<dbReference type="BioMuta" id="RDH5"/>
<dbReference type="DMDM" id="2492753"/>
<dbReference type="MassIVE" id="Q92781"/>
<dbReference type="PaxDb" id="9606-ENSP00000257895"/>
<dbReference type="PeptideAtlas" id="Q92781"/>
<dbReference type="ProteomicsDB" id="75459"/>
<dbReference type="Antibodypedia" id="27694">
    <property type="antibodies" value="98 antibodies from 27 providers"/>
</dbReference>
<dbReference type="DNASU" id="5959"/>
<dbReference type="Ensembl" id="ENST00000257895.10">
    <property type="protein sequence ID" value="ENSP00000257895.6"/>
    <property type="gene ID" value="ENSG00000135437.10"/>
</dbReference>
<dbReference type="Ensembl" id="ENST00000548082.1">
    <property type="protein sequence ID" value="ENSP00000447128.1"/>
    <property type="gene ID" value="ENSG00000135437.10"/>
</dbReference>
<dbReference type="GeneID" id="5959"/>
<dbReference type="KEGG" id="hsa:5959"/>
<dbReference type="MANE-Select" id="ENST00000257895.10">
    <property type="protein sequence ID" value="ENSP00000257895.6"/>
    <property type="RefSeq nucleotide sequence ID" value="NM_002905.5"/>
    <property type="RefSeq protein sequence ID" value="NP_002896.2"/>
</dbReference>
<dbReference type="UCSC" id="uc001shk.4">
    <property type="organism name" value="human"/>
</dbReference>
<dbReference type="AGR" id="HGNC:9940"/>
<dbReference type="CTD" id="5959"/>
<dbReference type="DisGeNET" id="5959"/>
<dbReference type="GeneCards" id="RDH5"/>
<dbReference type="HGNC" id="HGNC:9940">
    <property type="gene designation" value="RDH5"/>
</dbReference>
<dbReference type="HPA" id="ENSG00000135437">
    <property type="expression patterns" value="Tissue enhanced (adipose tissue, liver)"/>
</dbReference>
<dbReference type="MalaCards" id="RDH5"/>
<dbReference type="MIM" id="136880">
    <property type="type" value="phenotype"/>
</dbReference>
<dbReference type="MIM" id="601617">
    <property type="type" value="gene"/>
</dbReference>
<dbReference type="neXtProt" id="NX_Q92781"/>
<dbReference type="OpenTargets" id="ENSG00000135437"/>
<dbReference type="Orphanet" id="227796">
    <property type="disease" value="Fundus albipunctatus"/>
</dbReference>
<dbReference type="Orphanet" id="52427">
    <property type="disease" value="Retinitis punctata albescens"/>
</dbReference>
<dbReference type="PharmGKB" id="PA34308"/>
<dbReference type="VEuPathDB" id="HostDB:ENSG00000135437"/>
<dbReference type="eggNOG" id="KOG1610">
    <property type="taxonomic scope" value="Eukaryota"/>
</dbReference>
<dbReference type="GeneTree" id="ENSGT00940000161168"/>
<dbReference type="HOGENOM" id="CLU_010194_2_0_1"/>
<dbReference type="InParanoid" id="Q92781"/>
<dbReference type="OMA" id="WEDFHQV"/>
<dbReference type="OrthoDB" id="5296at2759"/>
<dbReference type="PAN-GO" id="Q92781">
    <property type="GO annotations" value="5 GO annotations based on evolutionary models"/>
</dbReference>
<dbReference type="PhylomeDB" id="Q92781"/>
<dbReference type="TreeFam" id="TF325617"/>
<dbReference type="BioCyc" id="MetaCyc:HS06003-MONOMER"/>
<dbReference type="BRENDA" id="1.1.1.300">
    <property type="organism ID" value="2681"/>
</dbReference>
<dbReference type="BRENDA" id="1.1.1.315">
    <property type="organism ID" value="2681"/>
</dbReference>
<dbReference type="PathwayCommons" id="Q92781"/>
<dbReference type="Reactome" id="R-HSA-2453902">
    <property type="pathway name" value="The canonical retinoid cycle in rods (twilight vision)"/>
</dbReference>
<dbReference type="Reactome" id="R-HSA-5365859">
    <property type="pathway name" value="RA biosynthesis pathway"/>
</dbReference>
<dbReference type="Reactome" id="R-HSA-9918438">
    <property type="pathway name" value="Defective visual phototransduction due to RDH5 loss of function"/>
</dbReference>
<dbReference type="SignaLink" id="Q92781"/>
<dbReference type="SIGNOR" id="Q92781"/>
<dbReference type="UniPathway" id="UPA00912"/>
<dbReference type="BioGRID-ORCS" id="5959">
    <property type="hits" value="20 hits in 1144 CRISPR screens"/>
</dbReference>
<dbReference type="GeneWiki" id="RDH5"/>
<dbReference type="GenomeRNAi" id="5959"/>
<dbReference type="Pharos" id="Q92781">
    <property type="development level" value="Tbio"/>
</dbReference>
<dbReference type="PRO" id="PR:Q92781"/>
<dbReference type="Proteomes" id="UP000005640">
    <property type="component" value="Chromosome 12"/>
</dbReference>
<dbReference type="RNAct" id="Q92781">
    <property type="molecule type" value="protein"/>
</dbReference>
<dbReference type="Bgee" id="ENSG00000135437">
    <property type="expression patterns" value="Expressed in subcutaneous adipose tissue and 100 other cell types or tissues"/>
</dbReference>
<dbReference type="ExpressionAtlas" id="Q92781">
    <property type="expression patterns" value="baseline and differential"/>
</dbReference>
<dbReference type="GO" id="GO:0044297">
    <property type="term" value="C:cell body"/>
    <property type="evidence" value="ECO:0007669"/>
    <property type="project" value="Ensembl"/>
</dbReference>
<dbReference type="GO" id="GO:0005788">
    <property type="term" value="C:endoplasmic reticulum lumen"/>
    <property type="evidence" value="ECO:0000314"/>
    <property type="project" value="UniProtKB"/>
</dbReference>
<dbReference type="GO" id="GO:0005789">
    <property type="term" value="C:endoplasmic reticulum membrane"/>
    <property type="evidence" value="ECO:0000314"/>
    <property type="project" value="UniProtKB"/>
</dbReference>
<dbReference type="GO" id="GO:0043231">
    <property type="term" value="C:intracellular membrane-bounded organelle"/>
    <property type="evidence" value="ECO:0000318"/>
    <property type="project" value="GO_Central"/>
</dbReference>
<dbReference type="GO" id="GO:0106429">
    <property type="term" value="F:11-cis-retinol dehydrogenase"/>
    <property type="evidence" value="ECO:0007669"/>
    <property type="project" value="UniProtKB-EC"/>
</dbReference>
<dbReference type="GO" id="GO:0004745">
    <property type="term" value="F:all-trans-retinol dehydrogenase (NAD+) activity"/>
    <property type="evidence" value="ECO:0000314"/>
    <property type="project" value="UniProtKB"/>
</dbReference>
<dbReference type="GO" id="GO:0047044">
    <property type="term" value="F:androstan-3-alpha,17-beta-diol dehydrogenase (NAD+) activity"/>
    <property type="evidence" value="ECO:0000314"/>
    <property type="project" value="UniProtKB"/>
</dbReference>
<dbReference type="GO" id="GO:0047023">
    <property type="term" value="F:androsterone dehydrogenase [NAD(P)+] activity"/>
    <property type="evidence" value="ECO:0000314"/>
    <property type="project" value="UniProtKB"/>
</dbReference>
<dbReference type="GO" id="GO:0042803">
    <property type="term" value="F:protein homodimerization activity"/>
    <property type="evidence" value="ECO:0000314"/>
    <property type="project" value="UniProtKB"/>
</dbReference>
<dbReference type="GO" id="GO:0001523">
    <property type="term" value="P:retinoid metabolic process"/>
    <property type="evidence" value="ECO:0000314"/>
    <property type="project" value="UniProtKB"/>
</dbReference>
<dbReference type="GO" id="GO:0042572">
    <property type="term" value="P:retinol metabolic process"/>
    <property type="evidence" value="ECO:0007669"/>
    <property type="project" value="UniProtKB-UniPathway"/>
</dbReference>
<dbReference type="GO" id="GO:0008202">
    <property type="term" value="P:steroid metabolic process"/>
    <property type="evidence" value="ECO:0000314"/>
    <property type="project" value="UniProtKB"/>
</dbReference>
<dbReference type="GO" id="GO:0007601">
    <property type="term" value="P:visual perception"/>
    <property type="evidence" value="ECO:0000304"/>
    <property type="project" value="ProtInc"/>
</dbReference>
<dbReference type="CDD" id="cd09805">
    <property type="entry name" value="type2_17beta_HSD-like_SDR_c"/>
    <property type="match status" value="1"/>
</dbReference>
<dbReference type="FunFam" id="3.40.50.720:FF:000074">
    <property type="entry name" value="Retinol dehydrogenase type 1"/>
    <property type="match status" value="1"/>
</dbReference>
<dbReference type="Gene3D" id="3.40.50.720">
    <property type="entry name" value="NAD(P)-binding Rossmann-like Domain"/>
    <property type="match status" value="1"/>
</dbReference>
<dbReference type="InterPro" id="IPR036291">
    <property type="entry name" value="NAD(P)-bd_dom_sf"/>
</dbReference>
<dbReference type="InterPro" id="IPR002347">
    <property type="entry name" value="SDR_fam"/>
</dbReference>
<dbReference type="PANTHER" id="PTHR43313:SF12">
    <property type="entry name" value="RETINOL DEHYDROGENASE 5"/>
    <property type="match status" value="1"/>
</dbReference>
<dbReference type="PANTHER" id="PTHR43313">
    <property type="entry name" value="SHORT-CHAIN DEHYDROGENASE/REDUCTASE FAMILY 9C"/>
    <property type="match status" value="1"/>
</dbReference>
<dbReference type="Pfam" id="PF00106">
    <property type="entry name" value="adh_short"/>
    <property type="match status" value="1"/>
</dbReference>
<dbReference type="PRINTS" id="PR00081">
    <property type="entry name" value="GDHRDH"/>
</dbReference>
<dbReference type="PRINTS" id="PR00080">
    <property type="entry name" value="SDRFAMILY"/>
</dbReference>
<dbReference type="SUPFAM" id="SSF51735">
    <property type="entry name" value="NAD(P)-binding Rossmann-fold domains"/>
    <property type="match status" value="1"/>
</dbReference>
<protein>
    <recommendedName>
        <fullName>Retinol dehydrogenase 5</fullName>
        <ecNumber evidence="19 21">1.1.1.209</ecNumber>
        <ecNumber evidence="6 12 21">1.1.1.315</ecNumber>
        <ecNumber evidence="21">1.1.1.53</ecNumber>
    </recommendedName>
    <alternativeName>
        <fullName evidence="23">11-cis retinol dehydrogenase</fullName>
        <shortName>11-cis RDH</shortName>
        <shortName>11-cis RoDH</shortName>
    </alternativeName>
    <alternativeName>
        <fullName>9-cis retinol dehydrogenase</fullName>
        <shortName>9cRDH</shortName>
    </alternativeName>
    <alternativeName>
        <fullName evidence="22">Short chain dehydrogenase/reductase family 9C member 5</fullName>
    </alternativeName>
</protein>
<organism>
    <name type="scientific">Homo sapiens</name>
    <name type="common">Human</name>
    <dbReference type="NCBI Taxonomy" id="9606"/>
    <lineage>
        <taxon>Eukaryota</taxon>
        <taxon>Metazoa</taxon>
        <taxon>Chordata</taxon>
        <taxon>Craniata</taxon>
        <taxon>Vertebrata</taxon>
        <taxon>Euteleostomi</taxon>
        <taxon>Mammalia</taxon>
        <taxon>Eutheria</taxon>
        <taxon>Euarchontoglires</taxon>
        <taxon>Primates</taxon>
        <taxon>Haplorrhini</taxon>
        <taxon>Catarrhini</taxon>
        <taxon>Hominidae</taxon>
        <taxon>Homo</taxon>
    </lineage>
</organism>
<keyword id="KW-0225">Disease variant</keyword>
<keyword id="KW-0256">Endoplasmic reticulum</keyword>
<keyword id="KW-0325">Glycoprotein</keyword>
<keyword id="KW-0443">Lipid metabolism</keyword>
<keyword id="KW-0472">Membrane</keyword>
<keyword id="KW-0520">NAD</keyword>
<keyword id="KW-0560">Oxidoreductase</keyword>
<keyword id="KW-1267">Proteomics identification</keyword>
<keyword id="KW-1185">Reference proteome</keyword>
<keyword id="KW-0716">Sensory transduction</keyword>
<keyword id="KW-0753">Steroid metabolism</keyword>
<keyword id="KW-0812">Transmembrane</keyword>
<keyword id="KW-1133">Transmembrane helix</keyword>
<keyword id="KW-0844">Vision</keyword>
<feature type="chain" id="PRO_0000054758" description="Retinol dehydrogenase 5">
    <location>
        <begin position="1"/>
        <end position="318"/>
    </location>
</feature>
<feature type="transmembrane region" description="Helical" evidence="4">
    <location>
        <begin position="1"/>
        <end position="21"/>
    </location>
</feature>
<feature type="topological domain" description="Lumenal" evidence="2">
    <location>
        <begin position="22"/>
        <end position="288"/>
    </location>
</feature>
<feature type="transmembrane region" description="Helical" evidence="4">
    <location>
        <begin position="289"/>
        <end position="309"/>
    </location>
</feature>
<feature type="topological domain" description="Cytoplasmic" evidence="24">
    <location>
        <begin position="310"/>
        <end position="318"/>
    </location>
</feature>
<feature type="active site" description="Proton acceptor" evidence="25">
    <location>
        <position position="175"/>
    </location>
</feature>
<feature type="binding site" evidence="1">
    <location>
        <begin position="32"/>
        <end position="56"/>
    </location>
    <ligand>
        <name>NADP(+)</name>
        <dbReference type="ChEBI" id="CHEBI:58349"/>
    </ligand>
</feature>
<feature type="binding site" evidence="1">
    <location>
        <position position="163"/>
    </location>
    <ligand>
        <name>substrate</name>
    </ligand>
</feature>
<feature type="glycosylation site" description="N-linked (GlcNAc...) asparagine" evidence="4">
    <location>
        <position position="160"/>
    </location>
</feature>
<feature type="sequence variant" id="VAR_052321" description="In dbSNP:rs3138143.">
    <original>R</original>
    <variation>Q</variation>
    <location>
        <position position="21"/>
    </location>
</feature>
<feature type="sequence variant" id="VAR_009272" description="In dbSNP:rs62638195." evidence="5">
    <original>I</original>
    <variation>V</variation>
    <location>
        <position position="33"/>
    </location>
</feature>
<feature type="sequence variant" id="VAR_016814" description="In FALBI; decreased stability; dbSNP:rs759359491." evidence="8 12">
    <original>G</original>
    <variation>S</variation>
    <location>
        <position position="35"/>
    </location>
</feature>
<feature type="sequence variant" id="VAR_052322" description="In dbSNP:rs1058635." evidence="20">
    <original>R</original>
    <variation>G</variation>
    <location>
        <position position="70"/>
    </location>
</feature>
<feature type="sequence variant" id="VAR_009273" description="In FALBI; decreased stability; loss of 11-cis retinol dehydrogenase activity; accumulates in the perinuclear region; dbSNP:rs62638185." evidence="5 12">
    <original>S</original>
    <variation>F</variation>
    <location>
        <position position="73"/>
    </location>
</feature>
<feature type="sequence variant" id="VAR_068716" description="In FALBI; decreased stability; dbSNP:rs765993603." evidence="12">
    <original>L</original>
    <variation>I</variation>
    <location>
        <position position="105"/>
    </location>
</feature>
<feature type="sequence variant" id="VAR_016815" description="In FALBI; associated with macular dystrophy." evidence="8 13">
    <original>G</original>
    <variation>R</variation>
    <location>
        <position position="107"/>
    </location>
</feature>
<feature type="sequence variant" id="VAR_068717" description="In FALBI; decreased stability; dbSNP:rs377029071." evidence="12">
    <original>D</original>
    <variation>N</variation>
    <location>
        <position position="128"/>
    </location>
</feature>
<feature type="sequence variant" id="VAR_016816" description="In FALBI; dbSNP:rs62638187." evidence="8">
    <original>V</original>
    <variation>M</variation>
    <location>
        <position position="132"/>
    </location>
</feature>
<feature type="sequence variant" id="VAR_068718" description="In FALBI; decreased stability; dbSNP:rs104894374." evidence="12">
    <original>R</original>
    <variation>W</variation>
    <location>
        <position position="157"/>
    </location>
</feature>
<feature type="sequence variant" id="VAR_016817" description="In FALBI; dbSNP:rs755168439." evidence="14">
    <original>V</original>
    <variation>F</variation>
    <location>
        <position position="164"/>
    </location>
</feature>
<feature type="sequence variant" id="VAR_075309" description="In FALBI; dbSNP:rs758411232." evidence="17">
    <original>Y</original>
    <variation>F</variation>
    <location>
        <position position="175"/>
    </location>
</feature>
<feature type="sequence variant" id="VAR_016818" description="In FALBI; dbSNP:rs104894373." evidence="10">
    <original>V</original>
    <variation>G</variation>
    <location>
        <position position="177"/>
    </location>
</feature>
<feature type="sequence variant" id="VAR_081472" description="In FALBI; dbSNP:rs781112960." evidence="16 18">
    <original>K</original>
    <variation>R</variation>
    <location>
        <position position="179"/>
    </location>
</feature>
<feature type="sequence variant" id="VAR_009274" description="In FALBI; decreased stability; loss of 11-cis retinol dehydrogenase activity; accumulates in the perinuclear region; dbSNP:rs62638191." evidence="5 7 12">
    <original>G</original>
    <variation>W</variation>
    <location>
        <position position="238"/>
    </location>
</feature>
<feature type="sequence variant" id="VAR_081462" description="In FALBI; dbSNP:rs780377973." evidence="15 18">
    <original>M</original>
    <variation>R</variation>
    <location>
        <position position="253"/>
    </location>
</feature>
<feature type="sequence variant" id="VAR_068719" description="In FALBI; decreased stability." evidence="9 12">
    <original>V</original>
    <variation>G</variation>
    <location>
        <position position="264"/>
    </location>
</feature>
<feature type="sequence variant" id="VAR_016819" description="In FALBI." evidence="11">
    <original>C</original>
    <variation>W</variation>
    <location>
        <position position="267"/>
    </location>
</feature>
<feature type="sequence variant" id="VAR_016820" description="In FALBI; decreased stability; loss of 11-cis retinol dehydrogenase activity; dbSNP:rs62638193." evidence="7 8 10 12">
    <original>R</original>
    <variation>H</variation>
    <location>
        <position position="280"/>
    </location>
</feature>
<feature type="sequence variant" id="VAR_016821" description="In FALBI; dbSNP:rs62638194." evidence="8">
    <original>Y</original>
    <variation>H</variation>
    <location>
        <position position="281"/>
    </location>
</feature>
<feature type="sequence variant" id="VAR_016822" description="In FALBI; no effect on 11-cis retinol dehydrogenase activity; accumulates in the perinuclear region; dbSNP:rs111033593." evidence="7 12">
    <original>A</original>
    <variation>P</variation>
    <location>
        <position position="294"/>
    </location>
</feature>
<feature type="sequence variant" id="VAR_016823" description="In FALBI; loss of 11-cis retinol dehydrogenase activity; accumulates in the perinuclear region." evidence="8 9 12">
    <original>L</original>
    <variation>EV</variation>
    <location>
        <position position="310"/>
    </location>
</feature>
<feature type="mutagenesis site" description="Decreases androsterone dehydrogenase activity." evidence="19">
    <original>YCVSK</original>
    <variation>FCVSR</variation>
    <location>
        <begin position="175"/>
        <end position="179"/>
    </location>
</feature>
<feature type="sequence conflict" description="In Ref. 4; AAH28298." evidence="24" ref="4">
    <original>F</original>
    <variation>L</variation>
    <location>
        <position position="30"/>
    </location>
</feature>
<feature type="sequence conflict" description="In Ref. 2; AAB93668." evidence="24" ref="2">
    <original>RG</original>
    <variation>KS</variation>
    <location>
        <begin position="51"/>
        <end position="52"/>
    </location>
</feature>
<feature type="sequence conflict" description="In Ref. 2; AAB93668." evidence="24" ref="2">
    <original>RLH</original>
    <variation>GFN</variation>
    <location>
        <begin position="75"/>
        <end position="77"/>
    </location>
</feature>
<feature type="sequence conflict" description="In Ref. 2; AAB93668." evidence="24" ref="2">
    <original>V</original>
    <variation>F</variation>
    <location>
        <position position="89"/>
    </location>
</feature>
<feature type="sequence conflict" description="In Ref. 2; AAB93668." evidence="24" ref="2">
    <original>V</original>
    <variation>E</variation>
    <location>
        <position position="200"/>
    </location>
</feature>
<reference key="1">
    <citation type="journal article" date="1996" name="Genomics">
        <title>Primary structure of human 11-cis retinol dehydrogenase and organization and chromosomal localization of the corresponding gene.</title>
        <authorList>
            <person name="Simon A."/>
            <person name="Lagercrantz J."/>
            <person name="Bajalica-Lagercrantz S."/>
            <person name="Eriksson U."/>
        </authorList>
    </citation>
    <scope>NUCLEOTIDE SEQUENCE [MRNA]</scope>
</reference>
<reference key="2">
    <citation type="journal article" date="1997" name="J. Biol. Chem.">
        <title>Identification and characterization of a stereospecific human enzyme that catalyzes 9-cis-retinol oxidation. A possible role in 9-cis-retinoic acid formation.</title>
        <authorList>
            <person name="Mertz J.R."/>
            <person name="Shang E."/>
            <person name="Piantedosi R."/>
            <person name="Wei S."/>
            <person name="Wolgemuth D.J."/>
            <person name="Blaner W.S."/>
        </authorList>
    </citation>
    <scope>NUCLEOTIDE SEQUENCE [MRNA]</scope>
    <scope>FUNCTION</scope>
    <scope>CATALYTIC ACTIVITY</scope>
    <scope>PATHWAY</scope>
    <scope>BIOPHYSICOCHEMICAL PROPERTIES</scope>
    <scope>TISSUE SPECIFICITY</scope>
    <scope>VARIANT GLY-70</scope>
    <source>
        <tissue>Mammary gland</tissue>
    </source>
</reference>
<reference key="3">
    <citation type="submission" date="1997-12" db="EMBL/GenBank/DDBJ databases">
        <title>Retinol dehydrogenase: complete genomic sequence and its relationship to retinitis pigmentosa.</title>
        <authorList>
            <person name="Gu S."/>
            <person name="Jablonka S."/>
            <person name="Gal A."/>
        </authorList>
    </citation>
    <scope>NUCLEOTIDE SEQUENCE [GENOMIC DNA]</scope>
    <source>
        <tissue>Blood</tissue>
    </source>
</reference>
<reference key="4">
    <citation type="journal article" date="2004" name="Genome Res.">
        <title>The status, quality, and expansion of the NIH full-length cDNA project: the Mammalian Gene Collection (MGC).</title>
        <authorList>
            <consortium name="The MGC Project Team"/>
        </authorList>
    </citation>
    <scope>NUCLEOTIDE SEQUENCE [LARGE SCALE MRNA]</scope>
    <source>
        <tissue>Brain</tissue>
    </source>
</reference>
<reference key="5">
    <citation type="journal article" date="1999" name="Biochem. J.">
        <title>Activity of human 11-cis-retinol dehydrogenase (Rdh5) with steroids and retinoids and expression of its mRNA in extra-ocular human tissue.</title>
        <authorList>
            <person name="Wang J."/>
            <person name="Chai X."/>
            <person name="Eriksson U."/>
            <person name="Napoli J.L."/>
        </authorList>
    </citation>
    <scope>CATALYTIC ACTIVITY</scope>
    <scope>TISSUE SPECIFICITY</scope>
    <scope>FUNCTION</scope>
</reference>
<reference key="6">
    <citation type="journal article" date="1999" name="J. Lipid Res.">
        <title>Biochemical properties, tissue expression, and gene structure of a short chain dehydrogenase/reductase able to catalyze cis-retinol oxidation.</title>
        <authorList>
            <person name="Gamble M.V."/>
            <person name="Shang E."/>
            <person name="Zott R.P."/>
            <person name="Mertz J.R."/>
            <person name="Wolgemuth D.J."/>
            <person name="Blaner W.S."/>
        </authorList>
    </citation>
    <scope>FUNCTION</scope>
    <scope>CATALYTIC ACTIVITY</scope>
    <scope>ACTIVITY REGULATION</scope>
</reference>
<reference key="7">
    <citation type="journal article" date="2001" name="J. Biol. Chem.">
        <title>Biochemical defects in 11-cis-retinol dehydrogenase mutants associated with fundus albipunctatus.</title>
        <authorList>
            <person name="Liden M."/>
            <person name="Romert A."/>
            <person name="Tryggvason K."/>
            <person name="Persson B."/>
            <person name="Eriksson U."/>
        </authorList>
    </citation>
    <scope>SUBUNIT</scope>
    <scope>CATALYTIC ACTIVITY</scope>
    <scope>SUBCELLULAR LOCATION</scope>
    <scope>CHARACTERIZATION OF VARIANTS FALBI SER-35; PHE-73; ILE-105; ASN-128; TRP-157; TRP-238; GLY-264; HIS-280; PRO-294 AND LEU-310 DELINS GLU-VAL</scope>
</reference>
<reference key="8">
    <citation type="journal article" date="2009" name="Chem. Biol. Interact.">
        <title>The SDR (short-chain dehydrogenase/reductase and related enzymes) nomenclature initiative.</title>
        <authorList>
            <person name="Persson B."/>
            <person name="Kallberg Y."/>
            <person name="Bray J.E."/>
            <person name="Bruford E."/>
            <person name="Dellaporta S.L."/>
            <person name="Favia A.D."/>
            <person name="Duarte R.G."/>
            <person name="Joernvall H."/>
            <person name="Kavanagh K.L."/>
            <person name="Kedishvili N."/>
            <person name="Kisiela M."/>
            <person name="Maser E."/>
            <person name="Mindnich R."/>
            <person name="Orchard S."/>
            <person name="Penning T.M."/>
            <person name="Thornton J.M."/>
            <person name="Adamski J."/>
            <person name="Oppermann U."/>
        </authorList>
    </citation>
    <scope>GENE FAMILY</scope>
    <scope>NOMENCLATURE</scope>
</reference>
<reference key="9">
    <citation type="journal article" date="1999" name="Mol. Vis.">
        <title>11-cis retinol dehydrogenase mutations as a major cause of the congenital night-blindness disorder known as fundus albipunctatus.</title>
        <authorList>
            <person name="Gonzalez-Fernandez F."/>
            <person name="Kurz D."/>
            <person name="Bao Y."/>
            <person name="Newman S."/>
            <person name="Conway B.P."/>
            <person name="Young J.E."/>
            <person name="Han D.P."/>
            <person name="Khani S.C."/>
        </authorList>
    </citation>
    <scope>VARIANTS FALBI TRP-238; HIS-280 AND PRO-294</scope>
</reference>
<reference key="10">
    <citation type="journal article" date="1999" name="Nat. Genet.">
        <title>Mutations in the gene encoding 11-cis retinol dehydrogenase cause delayed dark adaptation and fundus albipunctatus.</title>
        <authorList>
            <person name="Yamamoto H."/>
            <person name="Simon A."/>
            <person name="Eriksson U."/>
            <person name="Harris E."/>
            <person name="Berson E.L."/>
            <person name="Dryja T.P."/>
        </authorList>
    </citation>
    <scope>VARIANTS FALBI PHE-73 AND TRP-238</scope>
    <scope>VARIANT VAL-33</scope>
</reference>
<reference key="11">
    <citation type="journal article" date="2000" name="Am. J. Ophthalmol.">
        <title>A novel compound heterozygous mutation in the RDH5 gene in a patient with fundus albipunctatus.</title>
        <authorList>
            <person name="Kuroiwa S."/>
            <person name="Kikuchi T."/>
            <person name="Yoshimura N."/>
        </authorList>
    </citation>
    <scope>VARIANTS FALBI GLY-177 AND HIS-280</scope>
</reference>
<reference key="12">
    <citation type="journal article" date="2000" name="Invest. Ophthalmol. Vis. Sci.">
        <title>A high association with cone dystrophy in Fundus albipunctatus caused by mutations of the RDH5 gene.</title>
        <authorList>
            <person name="Nakamura M."/>
            <person name="Hotta Y."/>
            <person name="Tanikawa A."/>
            <person name="Terasaki H."/>
            <person name="Miyake Y."/>
        </authorList>
    </citation>
    <scope>VARIANTS FALBI SER-35; ARG-107; MET-132; HIS-280; HIS-281 AND LEU-310 DELINS GLU-VAL</scope>
</reference>
<reference key="13">
    <citation type="journal article" date="2000" name="Invest. Ophthalmol. Vis. Sci.">
        <title>Mutations in the 11-cis retinol dehydrogenase gene in Japanese patients with Fundus albipunctatus.</title>
        <authorList>
            <person name="Hirose E."/>
            <person name="Inoue Y."/>
            <person name="Morimura H."/>
            <person name="Okamoto N."/>
            <person name="Fukuda M."/>
            <person name="Yamamoto S."/>
            <person name="Fujikado T."/>
            <person name="Tano Y."/>
        </authorList>
    </citation>
    <scope>VARIANTS FALBI GLY-264 AND LEU-310 DELINS GLU-VAL</scope>
</reference>
<reference key="14">
    <citation type="journal article" date="2001" name="Ophthalmology">
        <title>Null mutation in the human 11-cis retinol dehydrogenase gene associated with fundus albipunctatus.</title>
        <authorList>
            <person name="Driessen C.A."/>
            <person name="Janssen B.P."/>
            <person name="Winkens H.J."/>
            <person name="Kuhlmann L.D."/>
            <person name="Van Vugt A.H."/>
            <person name="Pinckers A.J."/>
            <person name="Deutman A.F."/>
            <person name="Janssen J.J."/>
        </authorList>
    </citation>
    <scope>VARIANT FALBI TRP-267</scope>
</reference>
<reference key="15">
    <citation type="journal article" date="2003" name="Am. J. Ophthalmol.">
        <title>Macular dystrophy in a Japanese family with fundus albipunctatus.</title>
        <authorList>
            <person name="Hotta K."/>
            <person name="Nakamura M."/>
            <person name="Kondo M."/>
            <person name="Ito S."/>
            <person name="Terasaki H."/>
            <person name="Miyake Y."/>
            <person name="Hida T."/>
        </authorList>
    </citation>
    <scope>VARIANT FALBI ARG-107</scope>
</reference>
<reference key="16">
    <citation type="journal article" date="2003" name="Am. J. Ophthalmol.">
        <title>A novel RDH5 gene mutation in a patient with fundus albipunctatus presenting with macular atrophy and fading white dots.</title>
        <authorList>
            <person name="Yamamoto H."/>
            <person name="Yakushijin K."/>
            <person name="Kusuhara S."/>
            <person name="Escano M.F."/>
            <person name="Nagai A."/>
            <person name="Negi A."/>
        </authorList>
    </citation>
    <scope>VARIANT FALBI PHE-164</scope>
</reference>
<reference key="17">
    <citation type="journal article" date="2012" name="Mol. Vis.">
        <title>Novel mutations in RDH5 cause fundus albipunctatus in two consanguineous Pakistani families.</title>
        <authorList>
            <person name="Ajmal M."/>
            <person name="Khan M.I."/>
            <person name="Neveling K."/>
            <person name="Khan Y.M."/>
            <person name="Ali S.H."/>
            <person name="Ahmed W."/>
            <person name="Iqbal M.S."/>
            <person name="Azam M."/>
            <person name="den Hollander A.I."/>
            <person name="Collin R.W."/>
            <person name="Qamar R."/>
            <person name="Cremers F.P."/>
        </authorList>
    </citation>
    <scope>VARIANT FALBI ARG-253</scope>
</reference>
<reference key="18">
    <citation type="journal article" date="2014" name="Genomics">
        <title>exomeSuite: Whole exome sequence variant filtering tool for rapid identification of putative disease causing SNVs/indels.</title>
        <authorList>
            <person name="Maranhao B."/>
            <person name="Biswas P."/>
            <person name="Duncan J.L."/>
            <person name="Branham K.E."/>
            <person name="Silva G.A."/>
            <person name="Naeem M.A."/>
            <person name="Khan S.N."/>
            <person name="Riazuddin S."/>
            <person name="Hejtmancik J.F."/>
            <person name="Heckenlively J.R."/>
            <person name="Riazuddin S.A."/>
            <person name="Lee P.L."/>
            <person name="Ayyagari R."/>
        </authorList>
    </citation>
    <scope>VARIANT FALBI ARG-179</scope>
</reference>
<reference key="19">
    <citation type="journal article" date="2015" name="J. Appl. Genet.">
        <title>Fundus albipunctatus: review of the literature and report of a novel RDH5 gene mutation affecting the invariant tyrosine (p.Tyr175Phe).</title>
        <authorList>
            <person name="Skorczyk-Werner A."/>
            <person name="Pawlowski P."/>
            <person name="Michalczuk M."/>
            <person name="Warowicka A."/>
            <person name="Wawrocka A."/>
            <person name="Wicher K."/>
            <person name="Bakunowicz-Lazarczyk A."/>
            <person name="Krawczynski M.R."/>
        </authorList>
    </citation>
    <scope>VARIANT FALBI PHE-175</scope>
</reference>
<reference key="20">
    <citation type="journal article" date="2017" name="Invest. Ophthalmol. Vis. Sci.">
        <title>Homozygosity Mapping and Genetic Analysis of Autosomal Recessive Retinal Dystrophies in 144 Consanguineous Pakistani Families.</title>
        <authorList>
            <person name="Li L."/>
            <person name="Chen Y."/>
            <person name="Jiao X."/>
            <person name="Jin C."/>
            <person name="Jiang D."/>
            <person name="Tanwar M."/>
            <person name="Ma Z."/>
            <person name="Huang L."/>
            <person name="Ma X."/>
            <person name="Sun W."/>
            <person name="Chen J."/>
            <person name="Ma Y."/>
            <person name="M'hamdi O."/>
            <person name="Govindarajan G."/>
            <person name="Cabrera P.E."/>
            <person name="Li J."/>
            <person name="Gupta N."/>
            <person name="Naeem M.A."/>
            <person name="Khan S.N."/>
            <person name="Riazuddin S."/>
            <person name="Akram J."/>
            <person name="Ayyagari R."/>
            <person name="Sieving P.A."/>
            <person name="Riazuddin S.A."/>
            <person name="Hejtmancik J.F."/>
        </authorList>
    </citation>
    <scope>VARIANTS FALBI ARG-179 AND ARG-253</scope>
</reference>
<reference key="21">
    <citation type="journal article" date="2018" name="Oncotarget">
        <title>Inhibition of dihydrotestosterone synthesis in prostate cancer by combined frontdoor and backdoor pathway blockade.</title>
        <authorList>
            <person name="Fiandalo M.V."/>
            <person name="Stocking J.J."/>
            <person name="Pop E.A."/>
            <person name="Wilton J.H."/>
            <person name="Mantione K.M."/>
            <person name="Li Y."/>
            <person name="Attwood K.M."/>
            <person name="Azabdaftari G."/>
            <person name="Wu Y."/>
            <person name="Watt D.S."/>
            <person name="Wilson E.M."/>
            <person name="Mohler J.L."/>
        </authorList>
    </citation>
    <scope>MUTAGENESIS OF 175-TYR--LYS-179</scope>
    <scope>CATALYTIC ACTIVITY</scope>
</reference>
<accession>Q92781</accession>
<accession>O00179</accession>
<accession>Q8TAI2</accession>
<name>RDH5_HUMAN</name>
<evidence type="ECO:0000250" key="1"/>
<evidence type="ECO:0000250" key="2">
    <source>
        <dbReference type="UniProtKB" id="O55240"/>
    </source>
</evidence>
<evidence type="ECO:0000250" key="3">
    <source>
        <dbReference type="UniProtKB" id="Q27979"/>
    </source>
</evidence>
<evidence type="ECO:0000255" key="4"/>
<evidence type="ECO:0000269" key="5">
    <source>
    </source>
</evidence>
<evidence type="ECO:0000269" key="6">
    <source>
    </source>
</evidence>
<evidence type="ECO:0000269" key="7">
    <source>
    </source>
</evidence>
<evidence type="ECO:0000269" key="8">
    <source>
    </source>
</evidence>
<evidence type="ECO:0000269" key="9">
    <source>
    </source>
</evidence>
<evidence type="ECO:0000269" key="10">
    <source>
    </source>
</evidence>
<evidence type="ECO:0000269" key="11">
    <source>
    </source>
</evidence>
<evidence type="ECO:0000269" key="12">
    <source>
    </source>
</evidence>
<evidence type="ECO:0000269" key="13">
    <source>
    </source>
</evidence>
<evidence type="ECO:0000269" key="14">
    <source>
    </source>
</evidence>
<evidence type="ECO:0000269" key="15">
    <source>
    </source>
</evidence>
<evidence type="ECO:0000269" key="16">
    <source>
    </source>
</evidence>
<evidence type="ECO:0000269" key="17">
    <source>
    </source>
</evidence>
<evidence type="ECO:0000269" key="18">
    <source>
    </source>
</evidence>
<evidence type="ECO:0000269" key="19">
    <source>
    </source>
</evidence>
<evidence type="ECO:0000269" key="20">
    <source>
    </source>
</evidence>
<evidence type="ECO:0000269" key="21">
    <source>
    </source>
</evidence>
<evidence type="ECO:0000303" key="22">
    <source>
    </source>
</evidence>
<evidence type="ECO:0000303" key="23">
    <source>
    </source>
</evidence>
<evidence type="ECO:0000305" key="24"/>
<evidence type="ECO:0000305" key="25">
    <source>
    </source>
</evidence>
<evidence type="ECO:0000312" key="26">
    <source>
        <dbReference type="HGNC" id="HGNC:9940"/>
    </source>
</evidence>